<proteinExistence type="evidence at protein level"/>
<feature type="chain" id="PRO_0000162214" description="Pyruvate dehydrogenase E1 component subunit alpha, somatic form">
    <location>
        <begin position="1"/>
        <end position="13" status="greater than"/>
    </location>
</feature>
<feature type="non-terminal residue">
    <location>
        <position position="13"/>
    </location>
</feature>
<name>ODPA_CANLF</name>
<accession>P49823</accession>
<reference key="1">
    <citation type="journal article" date="1997" name="Electrophoresis">
        <title>HSC-2DPAGE and the two-dimensional gel electrophoresis database of dog heart proteins.</title>
        <authorList>
            <person name="Dunn M.J."/>
            <person name="Corbett J.M."/>
            <person name="Wheeler C.H."/>
        </authorList>
    </citation>
    <scope>PROTEIN SEQUENCE</scope>
    <source>
        <tissue>Heart</tissue>
    </source>
</reference>
<evidence type="ECO:0000250" key="1"/>
<evidence type="ECO:0000250" key="2">
    <source>
        <dbReference type="UniProtKB" id="P08559"/>
    </source>
</evidence>
<sequence length="13" mass="1513">XXDATFEIKKXDL</sequence>
<gene>
    <name type="primary">PDHA1</name>
</gene>
<keyword id="KW-0119">Carbohydrate metabolism</keyword>
<keyword id="KW-0903">Direct protein sequencing</keyword>
<keyword id="KW-0313">Glucose metabolism</keyword>
<keyword id="KW-0460">Magnesium</keyword>
<keyword id="KW-0479">Metal-binding</keyword>
<keyword id="KW-0496">Mitochondrion</keyword>
<keyword id="KW-0560">Oxidoreductase</keyword>
<keyword id="KW-0597">Phosphoprotein</keyword>
<keyword id="KW-0670">Pyruvate</keyword>
<keyword id="KW-1185">Reference proteome</keyword>
<keyword id="KW-0786">Thiamine pyrophosphate</keyword>
<keyword id="KW-0816">Tricarboxylic acid cycle</keyword>
<protein>
    <recommendedName>
        <fullName>Pyruvate dehydrogenase E1 component subunit alpha, somatic form</fullName>
        <ecNumber>1.2.4.1</ecNumber>
    </recommendedName>
    <alternativeName>
        <fullName>PDHE1-A type I</fullName>
    </alternativeName>
</protein>
<organism>
    <name type="scientific">Canis lupus familiaris</name>
    <name type="common">Dog</name>
    <name type="synonym">Canis familiaris</name>
    <dbReference type="NCBI Taxonomy" id="9615"/>
    <lineage>
        <taxon>Eukaryota</taxon>
        <taxon>Metazoa</taxon>
        <taxon>Chordata</taxon>
        <taxon>Craniata</taxon>
        <taxon>Vertebrata</taxon>
        <taxon>Euteleostomi</taxon>
        <taxon>Mammalia</taxon>
        <taxon>Eutheria</taxon>
        <taxon>Laurasiatheria</taxon>
        <taxon>Carnivora</taxon>
        <taxon>Caniformia</taxon>
        <taxon>Canidae</taxon>
        <taxon>Canis</taxon>
    </lineage>
</organism>
<comment type="function">
    <text evidence="1">The pyruvate dehydrogenase complex catalyzes the overall conversion of pyruvate to acetyl-CoA and CO(2), and thereby links the glycolytic pathway to the tricarboxylic cycle.</text>
</comment>
<comment type="catalytic activity">
    <reaction>
        <text>N(6)-[(R)-lipoyl]-L-lysyl-[protein] + pyruvate + H(+) = N(6)-[(R)-S(8)-acetyldihydrolipoyl]-L-lysyl-[protein] + CO2</text>
        <dbReference type="Rhea" id="RHEA:19189"/>
        <dbReference type="Rhea" id="RHEA-COMP:10474"/>
        <dbReference type="Rhea" id="RHEA-COMP:10478"/>
        <dbReference type="ChEBI" id="CHEBI:15361"/>
        <dbReference type="ChEBI" id="CHEBI:15378"/>
        <dbReference type="ChEBI" id="CHEBI:16526"/>
        <dbReference type="ChEBI" id="CHEBI:83099"/>
        <dbReference type="ChEBI" id="CHEBI:83111"/>
        <dbReference type="EC" id="1.2.4.1"/>
    </reaction>
</comment>
<comment type="cofactor">
    <cofactor evidence="2">
        <name>thiamine diphosphate</name>
        <dbReference type="ChEBI" id="CHEBI:58937"/>
    </cofactor>
    <cofactor evidence="2">
        <name>Mg(2+)</name>
        <dbReference type="ChEBI" id="CHEBI:18420"/>
    </cofactor>
</comment>
<comment type="activity regulation">
    <text evidence="1">Pyruvate dehydrogenase activity is inhibited by phosphorylation of PDHA1; it is reactivated by dephosphorylation.</text>
</comment>
<comment type="subunit">
    <text evidence="1">Heterotetramer of two PDHA1 and two PDHB subunits. The heterotetramer interacts with DLAT, and is part of the multimeric pyruvate dehydrogenase complex that contains multiple copies of pyruvate dehydrogenase (E1), dihydrolipoamide acetyltransferase (DLAT, E2) and lipoamide dehydrogenase (DLD, E3). These subunits are bound to an inner core composed of about 48 DLAT and 12 PDHX molecules (By similarity).</text>
</comment>
<comment type="subcellular location">
    <subcellularLocation>
        <location evidence="1">Mitochondrion matrix</location>
    </subcellularLocation>
</comment>
<comment type="PTM">
    <text evidence="1">Phosphorylation by PDK family kinases inactivates the enzyme; it is reactivated by dephosphorylation.</text>
</comment>
<dbReference type="EC" id="1.2.4.1"/>
<dbReference type="FunCoup" id="P49823">
    <property type="interactions" value="869"/>
</dbReference>
<dbReference type="InParanoid" id="P49823"/>
<dbReference type="OrthoDB" id="10256198at2759"/>
<dbReference type="Proteomes" id="UP000002254">
    <property type="component" value="Unplaced"/>
</dbReference>
<dbReference type="Proteomes" id="UP000694429">
    <property type="component" value="Unplaced"/>
</dbReference>
<dbReference type="Proteomes" id="UP000694542">
    <property type="component" value="Unplaced"/>
</dbReference>
<dbReference type="Proteomes" id="UP000805418">
    <property type="component" value="Unplaced"/>
</dbReference>
<dbReference type="GO" id="GO:0005759">
    <property type="term" value="C:mitochondrial matrix"/>
    <property type="evidence" value="ECO:0007669"/>
    <property type="project" value="UniProtKB-SubCell"/>
</dbReference>
<dbReference type="GO" id="GO:0045254">
    <property type="term" value="C:pyruvate dehydrogenase complex"/>
    <property type="evidence" value="ECO:0000250"/>
    <property type="project" value="UniProtKB"/>
</dbReference>
<dbReference type="GO" id="GO:0046872">
    <property type="term" value="F:metal ion binding"/>
    <property type="evidence" value="ECO:0007669"/>
    <property type="project" value="UniProtKB-KW"/>
</dbReference>
<dbReference type="GO" id="GO:0004739">
    <property type="term" value="F:pyruvate dehydrogenase (acetyl-transferring) activity"/>
    <property type="evidence" value="ECO:0007669"/>
    <property type="project" value="UniProtKB-EC"/>
</dbReference>
<dbReference type="GO" id="GO:0006006">
    <property type="term" value="P:glucose metabolic process"/>
    <property type="evidence" value="ECO:0007669"/>
    <property type="project" value="UniProtKB-KW"/>
</dbReference>
<dbReference type="GO" id="GO:0006086">
    <property type="term" value="P:pyruvate decarboxylation to acetyl-CoA"/>
    <property type="evidence" value="ECO:0000250"/>
    <property type="project" value="UniProtKB"/>
</dbReference>
<dbReference type="GO" id="GO:0006099">
    <property type="term" value="P:tricarboxylic acid cycle"/>
    <property type="evidence" value="ECO:0007669"/>
    <property type="project" value="UniProtKB-KW"/>
</dbReference>